<proteinExistence type="inferred from homology"/>
<reference key="1">
    <citation type="journal article" date="2001" name="Science">
        <title>Comparative genomics of Listeria species.</title>
        <authorList>
            <person name="Glaser P."/>
            <person name="Frangeul L."/>
            <person name="Buchrieser C."/>
            <person name="Rusniok C."/>
            <person name="Amend A."/>
            <person name="Baquero F."/>
            <person name="Berche P."/>
            <person name="Bloecker H."/>
            <person name="Brandt P."/>
            <person name="Chakraborty T."/>
            <person name="Charbit A."/>
            <person name="Chetouani F."/>
            <person name="Couve E."/>
            <person name="de Daruvar A."/>
            <person name="Dehoux P."/>
            <person name="Domann E."/>
            <person name="Dominguez-Bernal G."/>
            <person name="Duchaud E."/>
            <person name="Durant L."/>
            <person name="Dussurget O."/>
            <person name="Entian K.-D."/>
            <person name="Fsihi H."/>
            <person name="Garcia-del Portillo F."/>
            <person name="Garrido P."/>
            <person name="Gautier L."/>
            <person name="Goebel W."/>
            <person name="Gomez-Lopez N."/>
            <person name="Hain T."/>
            <person name="Hauf J."/>
            <person name="Jackson D."/>
            <person name="Jones L.-M."/>
            <person name="Kaerst U."/>
            <person name="Kreft J."/>
            <person name="Kuhn M."/>
            <person name="Kunst F."/>
            <person name="Kurapkat G."/>
            <person name="Madueno E."/>
            <person name="Maitournam A."/>
            <person name="Mata Vicente J."/>
            <person name="Ng E."/>
            <person name="Nedjari H."/>
            <person name="Nordsiek G."/>
            <person name="Novella S."/>
            <person name="de Pablos B."/>
            <person name="Perez-Diaz J.-C."/>
            <person name="Purcell R."/>
            <person name="Remmel B."/>
            <person name="Rose M."/>
            <person name="Schlueter T."/>
            <person name="Simoes N."/>
            <person name="Tierrez A."/>
            <person name="Vazquez-Boland J.-A."/>
            <person name="Voss H."/>
            <person name="Wehland J."/>
            <person name="Cossart P."/>
        </authorList>
    </citation>
    <scope>NUCLEOTIDE SEQUENCE [LARGE SCALE GENOMIC DNA]</scope>
    <source>
        <strain>ATCC BAA-680 / CLIP 11262</strain>
    </source>
</reference>
<comment type="function">
    <text evidence="1">Catalyzes the first step in the D-alanylation of lipoteichoic acid (LTA), the activation of D-alanine and its transfer onto the D-alanyl carrier protein (Dcp) DltC. In an ATP-dependent two-step reaction, forms a high energy D-alanyl-AMP intermediate, followed by transfer of the D-alanyl residue as a thiol ester to the phosphopantheinyl prosthetic group of the Dcp. D-alanylation of LTA plays an important role in modulating the properties of the cell wall in Gram-positive bacteria, influencing the net charge of the cell wall.</text>
</comment>
<comment type="catalytic activity">
    <reaction evidence="1">
        <text>holo-[D-alanyl-carrier protein] + D-alanine + ATP = D-alanyl-[D-alanyl-carrier protein] + AMP + diphosphate</text>
        <dbReference type="Rhea" id="RHEA:55132"/>
        <dbReference type="Rhea" id="RHEA-COMP:14102"/>
        <dbReference type="Rhea" id="RHEA-COMP:14103"/>
        <dbReference type="ChEBI" id="CHEBI:30616"/>
        <dbReference type="ChEBI" id="CHEBI:33019"/>
        <dbReference type="ChEBI" id="CHEBI:57416"/>
        <dbReference type="ChEBI" id="CHEBI:64479"/>
        <dbReference type="ChEBI" id="CHEBI:138620"/>
        <dbReference type="ChEBI" id="CHEBI:456215"/>
        <dbReference type="EC" id="6.2.1.54"/>
    </reaction>
</comment>
<comment type="pathway">
    <text evidence="1">Cell wall biogenesis; lipoteichoic acid biosynthesis.</text>
</comment>
<comment type="subcellular location">
    <subcellularLocation>
        <location evidence="1">Cytoplasm</location>
    </subcellularLocation>
</comment>
<comment type="similarity">
    <text evidence="1">Belongs to the ATP-dependent AMP-binding enzyme family. DltA subfamily.</text>
</comment>
<organism>
    <name type="scientific">Listeria innocua serovar 6a (strain ATCC BAA-680 / CLIP 11262)</name>
    <dbReference type="NCBI Taxonomy" id="272626"/>
    <lineage>
        <taxon>Bacteria</taxon>
        <taxon>Bacillati</taxon>
        <taxon>Bacillota</taxon>
        <taxon>Bacilli</taxon>
        <taxon>Bacillales</taxon>
        <taxon>Listeriaceae</taxon>
        <taxon>Listeria</taxon>
    </lineage>
</organism>
<gene>
    <name evidence="1" type="primary">dltA</name>
    <name type="ordered locus">lin0973</name>
</gene>
<sequence length="510" mass="57742">MTTSIIERIDAWAEKTPDFPCYEYAGTRLSYKELKRQSDAFGSFLLNTLNSDKEKPIIVYGHMSPLMLIAFLGTIKSGRAYVPVDVSMPVERIEQIKKAADPALFICTEELPSNLTITGCPVLTQDQLMDALEKHFEEVPDPAECVKNDDNYYIIYTSGSTGNPKGVQISQNNLVSFSNWILQDFSLRQGLRFLNQAPFSFDLSVMDLYPSLLSGGTLVPLDKTITANMKDLYREIPAQNFDVWVSTPSFADLCLLDDNFNQENNPNLTRFLFCGEVLAKKTASELLDRFPDAVIYNTYGPTEATVAVTQVKVTRELIDAYPSLPLGVIKPDMRLHIVDQETGEILPEGEKGEIILIGASVSKGYLNEPEKTDQVFFDYKGYQAYHTGDSGVIKDGYLFFQGRLDFQIKLHGYRIELEDIENNLKKVSYIQNCAIIPKMKDEKVDMLVAQVIPSSHDFEKEYQLSAAIKNELKEFMPAYMIPRKWIYKTEFPLTMNGKIDRKALNSEVNK</sequence>
<name>DLTA_LISIN</name>
<evidence type="ECO:0000255" key="1">
    <source>
        <dbReference type="HAMAP-Rule" id="MF_00593"/>
    </source>
</evidence>
<feature type="chain" id="PRO_0000213146" description="D-alanine--D-alanyl carrier protein ligase">
    <location>
        <begin position="1"/>
        <end position="510"/>
    </location>
</feature>
<feature type="binding site" evidence="1">
    <location>
        <begin position="157"/>
        <end position="158"/>
    </location>
    <ligand>
        <name>ATP</name>
        <dbReference type="ChEBI" id="CHEBI:30616"/>
    </ligand>
</feature>
<feature type="binding site" evidence="1">
    <location>
        <position position="202"/>
    </location>
    <ligand>
        <name>D-alanine</name>
        <dbReference type="ChEBI" id="CHEBI:57416"/>
    </ligand>
</feature>
<feature type="binding site" evidence="1">
    <location>
        <begin position="297"/>
        <end position="302"/>
    </location>
    <ligand>
        <name>ATP</name>
        <dbReference type="ChEBI" id="CHEBI:30616"/>
    </ligand>
</feature>
<feature type="binding site" evidence="1">
    <location>
        <position position="306"/>
    </location>
    <ligand>
        <name>D-alanine</name>
        <dbReference type="ChEBI" id="CHEBI:57416"/>
    </ligand>
</feature>
<feature type="binding site" evidence="1">
    <location>
        <position position="389"/>
    </location>
    <ligand>
        <name>ATP</name>
        <dbReference type="ChEBI" id="CHEBI:30616"/>
    </ligand>
</feature>
<feature type="binding site" evidence="1">
    <location>
        <position position="498"/>
    </location>
    <ligand>
        <name>ATP</name>
        <dbReference type="ChEBI" id="CHEBI:30616"/>
    </ligand>
</feature>
<feature type="binding site" evidence="1">
    <location>
        <position position="498"/>
    </location>
    <ligand>
        <name>D-alanine</name>
        <dbReference type="ChEBI" id="CHEBI:57416"/>
    </ligand>
</feature>
<keyword id="KW-0067">ATP-binding</keyword>
<keyword id="KW-0963">Cytoplasm</keyword>
<keyword id="KW-0436">Ligase</keyword>
<keyword id="KW-0547">Nucleotide-binding</keyword>
<dbReference type="EC" id="6.2.1.54" evidence="1"/>
<dbReference type="EMBL" id="AL596167">
    <property type="protein sequence ID" value="CAC96204.1"/>
    <property type="molecule type" value="Genomic_DNA"/>
</dbReference>
<dbReference type="PIR" id="AD1554">
    <property type="entry name" value="AD1554"/>
</dbReference>
<dbReference type="RefSeq" id="WP_010990699.1">
    <property type="nucleotide sequence ID" value="NC_003212.1"/>
</dbReference>
<dbReference type="SMR" id="Q92D47"/>
<dbReference type="STRING" id="272626.gene:17565303"/>
<dbReference type="GeneID" id="93234420"/>
<dbReference type="KEGG" id="lin:dltA"/>
<dbReference type="eggNOG" id="COG1020">
    <property type="taxonomic scope" value="Bacteria"/>
</dbReference>
<dbReference type="HOGENOM" id="CLU_000022_2_12_9"/>
<dbReference type="OrthoDB" id="9765680at2"/>
<dbReference type="UniPathway" id="UPA00556"/>
<dbReference type="Proteomes" id="UP000002513">
    <property type="component" value="Chromosome"/>
</dbReference>
<dbReference type="GO" id="GO:0005737">
    <property type="term" value="C:cytoplasm"/>
    <property type="evidence" value="ECO:0007669"/>
    <property type="project" value="UniProtKB-SubCell"/>
</dbReference>
<dbReference type="GO" id="GO:0005524">
    <property type="term" value="F:ATP binding"/>
    <property type="evidence" value="ECO:0007669"/>
    <property type="project" value="UniProtKB-KW"/>
</dbReference>
<dbReference type="GO" id="GO:0047473">
    <property type="term" value="F:D-alanine [D-alanyl carrier protein] ligase activity"/>
    <property type="evidence" value="ECO:0007669"/>
    <property type="project" value="UniProtKB-UniRule"/>
</dbReference>
<dbReference type="GO" id="GO:0070395">
    <property type="term" value="P:lipoteichoic acid biosynthetic process"/>
    <property type="evidence" value="ECO:0007669"/>
    <property type="project" value="UniProtKB-UniRule"/>
</dbReference>
<dbReference type="CDD" id="cd05945">
    <property type="entry name" value="DltA"/>
    <property type="match status" value="1"/>
</dbReference>
<dbReference type="FunFam" id="3.30.300.30:FF:000012">
    <property type="entry name" value="D-alanine--D-alanyl carrier protein ligase"/>
    <property type="match status" value="1"/>
</dbReference>
<dbReference type="Gene3D" id="3.30.300.30">
    <property type="match status" value="1"/>
</dbReference>
<dbReference type="Gene3D" id="3.40.50.12780">
    <property type="entry name" value="N-terminal domain of ligase-like"/>
    <property type="match status" value="1"/>
</dbReference>
<dbReference type="HAMAP" id="MF_00593">
    <property type="entry name" value="DltA"/>
    <property type="match status" value="1"/>
</dbReference>
<dbReference type="InterPro" id="IPR010071">
    <property type="entry name" value="AA_adenyl_dom"/>
</dbReference>
<dbReference type="InterPro" id="IPR025110">
    <property type="entry name" value="AMP-bd_C"/>
</dbReference>
<dbReference type="InterPro" id="IPR045851">
    <property type="entry name" value="AMP-bd_C_sf"/>
</dbReference>
<dbReference type="InterPro" id="IPR020845">
    <property type="entry name" value="AMP-binding_CS"/>
</dbReference>
<dbReference type="InterPro" id="IPR000873">
    <property type="entry name" value="AMP-dep_synth/lig_dom"/>
</dbReference>
<dbReference type="InterPro" id="IPR042099">
    <property type="entry name" value="ANL_N_sf"/>
</dbReference>
<dbReference type="InterPro" id="IPR010072">
    <property type="entry name" value="DltA"/>
</dbReference>
<dbReference type="InterPro" id="IPR044507">
    <property type="entry name" value="DltA-like"/>
</dbReference>
<dbReference type="NCBIfam" id="TIGR01733">
    <property type="entry name" value="AA-adenyl-dom"/>
    <property type="match status" value="1"/>
</dbReference>
<dbReference type="NCBIfam" id="TIGR01734">
    <property type="entry name" value="D-ala-DACP-lig"/>
    <property type="match status" value="1"/>
</dbReference>
<dbReference type="NCBIfam" id="NF003417">
    <property type="entry name" value="PRK04813.1"/>
    <property type="match status" value="1"/>
</dbReference>
<dbReference type="PANTHER" id="PTHR45398">
    <property type="match status" value="1"/>
</dbReference>
<dbReference type="PANTHER" id="PTHR45398:SF1">
    <property type="entry name" value="ENZYME, PUTATIVE (JCVI)-RELATED"/>
    <property type="match status" value="1"/>
</dbReference>
<dbReference type="Pfam" id="PF00501">
    <property type="entry name" value="AMP-binding"/>
    <property type="match status" value="1"/>
</dbReference>
<dbReference type="Pfam" id="PF13193">
    <property type="entry name" value="AMP-binding_C"/>
    <property type="match status" value="1"/>
</dbReference>
<dbReference type="SUPFAM" id="SSF56801">
    <property type="entry name" value="Acetyl-CoA synthetase-like"/>
    <property type="match status" value="1"/>
</dbReference>
<dbReference type="PROSITE" id="PS00455">
    <property type="entry name" value="AMP_BINDING"/>
    <property type="match status" value="1"/>
</dbReference>
<accession>Q92D47</accession>
<protein>
    <recommendedName>
        <fullName evidence="1">D-alanine--D-alanyl carrier protein ligase</fullName>
        <shortName evidence="1">DCL</shortName>
        <ecNumber evidence="1">6.2.1.54</ecNumber>
    </recommendedName>
    <alternativeName>
        <fullName evidence="1">D-alanine--poly(phosphoribitol) ligase subunit 1</fullName>
    </alternativeName>
    <alternativeName>
        <fullName evidence="1">D-alanine-activating enzyme</fullName>
        <shortName evidence="1">DAE</shortName>
    </alternativeName>
</protein>